<name>CHED_CHAGB</name>
<protein>
    <recommendedName>
        <fullName evidence="5">Diels-Alderase cheD</fullName>
        <ecNumber evidence="7">5.5.1.-</ecNumber>
    </recommendedName>
    <alternativeName>
        <fullName evidence="5">Chaetoglobosin A biosynthesis cluster protein D</fullName>
    </alternativeName>
</protein>
<feature type="signal peptide" evidence="1">
    <location>
        <begin position="1"/>
        <end position="18"/>
    </location>
</feature>
<feature type="chain" id="PRO_5004208867" description="Diels-Alderase cheD">
    <location>
        <begin position="19"/>
        <end position="423"/>
    </location>
</feature>
<feature type="glycosylation site" description="N-linked (GlcNAc...) asparagine" evidence="2">
    <location>
        <position position="84"/>
    </location>
</feature>
<feature type="glycosylation site" description="N-linked (GlcNAc...) asparagine" evidence="2">
    <location>
        <position position="132"/>
    </location>
</feature>
<gene>
    <name evidence="5" type="primary">cheD</name>
    <name type="ORF">CHGG_01241</name>
</gene>
<keyword id="KW-0325">Glycoprotein</keyword>
<keyword id="KW-0413">Isomerase</keyword>
<keyword id="KW-1185">Reference proteome</keyword>
<keyword id="KW-0732">Signal</keyword>
<organism>
    <name type="scientific">Chaetomium globosum (strain ATCC 6205 / CBS 148.51 / DSM 1962 / NBRC 6347 / NRRL 1970)</name>
    <name type="common">Soil fungus</name>
    <dbReference type="NCBI Taxonomy" id="306901"/>
    <lineage>
        <taxon>Eukaryota</taxon>
        <taxon>Fungi</taxon>
        <taxon>Dikarya</taxon>
        <taxon>Ascomycota</taxon>
        <taxon>Pezizomycotina</taxon>
        <taxon>Sordariomycetes</taxon>
        <taxon>Sordariomycetidae</taxon>
        <taxon>Sordariales</taxon>
        <taxon>Chaetomiaceae</taxon>
        <taxon>Chaetomium</taxon>
    </lineage>
</organism>
<dbReference type="EC" id="5.5.1.-" evidence="7"/>
<dbReference type="EMBL" id="CH408029">
    <property type="protein sequence ID" value="EAQ93006.1"/>
    <property type="molecule type" value="Genomic_DNA"/>
</dbReference>
<dbReference type="RefSeq" id="XP_001220462.1">
    <property type="nucleotide sequence ID" value="XM_001220461.1"/>
</dbReference>
<dbReference type="SMR" id="Q2HEW3"/>
<dbReference type="STRING" id="306901.Q2HEW3"/>
<dbReference type="GlyCosmos" id="Q2HEW3">
    <property type="glycosylation" value="2 sites, No reported glycans"/>
</dbReference>
<dbReference type="GeneID" id="4387647"/>
<dbReference type="VEuPathDB" id="FungiDB:CHGG_01241"/>
<dbReference type="eggNOG" id="ENOG502SK1F">
    <property type="taxonomic scope" value="Eukaryota"/>
</dbReference>
<dbReference type="HOGENOM" id="CLU_041924_1_0_1"/>
<dbReference type="InParanoid" id="Q2HEW3"/>
<dbReference type="OMA" id="GGHERFW"/>
<dbReference type="OrthoDB" id="5344254at2759"/>
<dbReference type="Proteomes" id="UP000001056">
    <property type="component" value="Unassembled WGS sequence"/>
</dbReference>
<dbReference type="GO" id="GO:0016853">
    <property type="term" value="F:isomerase activity"/>
    <property type="evidence" value="ECO:0007669"/>
    <property type="project" value="UniProtKB-KW"/>
</dbReference>
<dbReference type="InterPro" id="IPR054499">
    <property type="entry name" value="DA_C"/>
</dbReference>
<dbReference type="Pfam" id="PF22903">
    <property type="entry name" value="DA_C"/>
    <property type="match status" value="1"/>
</dbReference>
<dbReference type="Pfam" id="PF24137">
    <property type="entry name" value="DA_N"/>
    <property type="match status" value="1"/>
</dbReference>
<dbReference type="SUPFAM" id="SSF159245">
    <property type="entry name" value="AttH-like"/>
    <property type="match status" value="1"/>
</dbReference>
<comment type="function">
    <text evidence="3 4 7">Diels-Alderase; part of the gene cluster that mediates the biosynthesis of chaetoglobosin A which has a unique inhibitory activity against actin polymerization in mammalian cells (PubMed:23611317, PubMed:33622536). Chaetoglobosin A and its intermediates are involved in the morphological differentiation of C.globosum (PubMed:33622536). The first step of the pathway is the synthesis of prochaetoglobosin I via condensation of one acetyl-CoA, 8 malonyl-CoA, and a L-tryptophan molecule by the PKS-NRPS hybrid synthetase cheA, followed by reduction of backbone double bond to install desired geometry by the enoyl reductase cheB (PubMed:23611317). Further multiple oxidation steps performed by the cytochrome P450 monooxygenases cheE and cheG, as well as by the FAD-linked oxidoreductase cheF, lead to the formation of chaetoglobosin A (PubMed:23611317). Depending on the order of action of these reductases, distinct intermediates can be identified (PubMed:23611317). Within the pathway, the cytochrome P450 monooxygenase cheE catalyzes a stereospecific epoxidation on prochaetoglobosin I, cytoglobosin D, and chaetoglobosin J intermediates (PubMed:23611317). The FAD-linked oxidoreductase cheF performs dehydrogenation of the C-20 hydroxyl groups in the 20-dihyrochaetoglobosin A and cytoglobosin D intermediates (PubMed:23611317). Finally, the cytochrome P450 monooxygenase cheG can catalyze the stereospecific dihydroxylation of prochaetoglobosin I and prochaetoglobosin IV at C-19 and C-20, respectively (PubMed:23611317). The Diels-Alderase cheD may play a role in the post-PKS-NRPS biosynthetic steps catalyzing Diels-Alder cyclization (Probable).</text>
</comment>
<comment type="pathway">
    <text evidence="4">Secondary metabolite biosynthesis.</text>
</comment>
<comment type="induction">
    <text evidence="4">Expression is positively regulated by the cluster-specific transcription factor cheR that binds directly to an asymmetric direct repeat present in the promoter.</text>
</comment>
<comment type="disruption phenotype">
    <text evidence="4">Abolishes the production of chaetoglobosin A.</text>
</comment>
<comment type="similarity">
    <text evidence="6">Belongs to the Diels-Alderase family.</text>
</comment>
<evidence type="ECO:0000255" key="1"/>
<evidence type="ECO:0000255" key="2">
    <source>
        <dbReference type="PROSITE-ProRule" id="PRU00498"/>
    </source>
</evidence>
<evidence type="ECO:0000269" key="3">
    <source>
    </source>
</evidence>
<evidence type="ECO:0000269" key="4">
    <source>
    </source>
</evidence>
<evidence type="ECO:0000303" key="5">
    <source>
    </source>
</evidence>
<evidence type="ECO:0000305" key="6"/>
<evidence type="ECO:0000305" key="7">
    <source>
    </source>
</evidence>
<accession>Q2HEW3</accession>
<reference key="1">
    <citation type="journal article" date="2015" name="Genome Announc.">
        <title>Draft genome sequence of the cellulolytic fungus Chaetomium globosum.</title>
        <authorList>
            <person name="Cuomo C.A."/>
            <person name="Untereiner W.A."/>
            <person name="Ma L.-J."/>
            <person name="Grabherr M."/>
            <person name="Birren B.W."/>
        </authorList>
    </citation>
    <scope>NUCLEOTIDE SEQUENCE [LARGE SCALE GENOMIC DNA]</scope>
    <source>
        <strain>ATCC 6205 / CBS 148.51 / DSM 1962 / NBRC 6347 / NRRL 1970</strain>
    </source>
</reference>
<reference key="2">
    <citation type="journal article" date="2013" name="J. Am. Chem. Soc.">
        <title>Combinatorial generation of complexity by redox enzymes in the chaetoglobosin A biosynthesis.</title>
        <authorList>
            <person name="Ishiuchi K."/>
            <person name="Nakazawa T."/>
            <person name="Yagishita F."/>
            <person name="Mino T."/>
            <person name="Noguchi H."/>
            <person name="Hotta K."/>
            <person name="Watanabe K."/>
        </authorList>
    </citation>
    <scope>FUNCTION</scope>
</reference>
<reference key="3">
    <citation type="journal article" date="2021" name="Fungal Biol.">
        <title>Functional analysis of a chaetoglobosin A biosynthetic regulator in Chaetomium globosum.</title>
        <authorList>
            <person name="Cheng M."/>
            <person name="Zhao S."/>
            <person name="Liu H."/>
            <person name="Liu Y."/>
            <person name="Lin C."/>
            <person name="Song J."/>
            <person name="Thawai C."/>
            <person name="Charoensettasilp S."/>
            <person name="Yang Q."/>
        </authorList>
    </citation>
    <scope>FUNCTION</scope>
    <scope>INDUCTION</scope>
    <scope>DISRUPTION PHENOTYPE</scope>
    <scope>PATHWAY</scope>
</reference>
<sequence length="423" mass="46809">MKLCALFAGAVISTSAVAASWEYAWPEEWHQEWPLDEQGPDAWSSSECTVSRLDAFEMEKGRKPVFFSTDPLDDPEAPKMLPLNSTGGEQWEFDGVSEDGQMAFCFGFYRDPNYAILGTGNLRLSAEFSRPNKTRFVRVDYPSSSTVTSCPWGTRGVWKGADYSYTFEVTRDIKVARIGVDAPDLKGSVVMRSVMPPRYPDGSTYPNKEASTEVVPYFRWLEAIPAADVRVDVVMDGQPYRWSGLGGHERLWTAFSWFTCLQAMTAVRVKAGPFAAVHGSFVSAIDKGLYRPSTVLAENDEVIFSTTLHEPSDTEDYAVFTKTYGGRVSGNLKEKATGYELVMVSPSAKKQWSFSITNEAIGFEYMLGEGVGGTGFSGRAVGGSIGLKQYFGPSFAETLEFPKRSYLFKSNYVDAVPEEKGEL</sequence>
<proteinExistence type="evidence at transcript level"/>